<feature type="chain" id="PRO_1000205238" description="UPF0145 protein YbjQ">
    <location>
        <begin position="1"/>
        <end position="107"/>
    </location>
</feature>
<evidence type="ECO:0000255" key="1">
    <source>
        <dbReference type="HAMAP-Rule" id="MF_00338"/>
    </source>
</evidence>
<proteinExistence type="inferred from homology"/>
<reference key="1">
    <citation type="journal article" date="2009" name="J. Bacteriol.">
        <title>Genomic sequencing reveals regulatory mutations and recombinational events in the widely used MC4100 lineage of Escherichia coli K-12.</title>
        <authorList>
            <person name="Ferenci T."/>
            <person name="Zhou Z."/>
            <person name="Betteridge T."/>
            <person name="Ren Y."/>
            <person name="Liu Y."/>
            <person name="Feng L."/>
            <person name="Reeves P.R."/>
            <person name="Wang L."/>
        </authorList>
    </citation>
    <scope>NUCLEOTIDE SEQUENCE [LARGE SCALE GENOMIC DNA]</scope>
    <source>
        <strain>K12 / MC4100 / BW2952</strain>
    </source>
</reference>
<comment type="similarity">
    <text evidence="1">Belongs to the UPF0145 family.</text>
</comment>
<name>YBJQ_ECOBW</name>
<organism>
    <name type="scientific">Escherichia coli (strain K12 / MC4100 / BW2952)</name>
    <dbReference type="NCBI Taxonomy" id="595496"/>
    <lineage>
        <taxon>Bacteria</taxon>
        <taxon>Pseudomonadati</taxon>
        <taxon>Pseudomonadota</taxon>
        <taxon>Gammaproteobacteria</taxon>
        <taxon>Enterobacterales</taxon>
        <taxon>Enterobacteriaceae</taxon>
        <taxon>Escherichia</taxon>
    </lineage>
</organism>
<protein>
    <recommendedName>
        <fullName evidence="1">UPF0145 protein YbjQ</fullName>
    </recommendedName>
</protein>
<gene>
    <name evidence="1" type="primary">ybjQ</name>
    <name type="ordered locus">BWG_0719</name>
</gene>
<accession>C4ZY38</accession>
<dbReference type="EMBL" id="CP001396">
    <property type="protein sequence ID" value="ACR62448.1"/>
    <property type="molecule type" value="Genomic_DNA"/>
</dbReference>
<dbReference type="RefSeq" id="WP_001160737.1">
    <property type="nucleotide sequence ID" value="NC_012759.1"/>
</dbReference>
<dbReference type="SMR" id="C4ZY38"/>
<dbReference type="KEGG" id="ebw:BWG_0719"/>
<dbReference type="HOGENOM" id="CLU_117144_3_0_6"/>
<dbReference type="Gene3D" id="3.30.110.70">
    <property type="entry name" value="Hypothetical protein apc22750. Chain B"/>
    <property type="match status" value="1"/>
</dbReference>
<dbReference type="HAMAP" id="MF_00338">
    <property type="entry name" value="UPF0145"/>
    <property type="match status" value="1"/>
</dbReference>
<dbReference type="InterPro" id="IPR035439">
    <property type="entry name" value="UPF0145_dom_sf"/>
</dbReference>
<dbReference type="InterPro" id="IPR002765">
    <property type="entry name" value="UPF0145_YbjQ-like"/>
</dbReference>
<dbReference type="NCBIfam" id="NF002776">
    <property type="entry name" value="PRK02877.1"/>
    <property type="match status" value="1"/>
</dbReference>
<dbReference type="PANTHER" id="PTHR34068">
    <property type="entry name" value="UPF0145 PROTEIN YBJQ"/>
    <property type="match status" value="1"/>
</dbReference>
<dbReference type="PANTHER" id="PTHR34068:SF1">
    <property type="entry name" value="UPF0145 PROTEIN YBJQ"/>
    <property type="match status" value="1"/>
</dbReference>
<dbReference type="Pfam" id="PF01906">
    <property type="entry name" value="YbjQ_1"/>
    <property type="match status" value="1"/>
</dbReference>
<dbReference type="SUPFAM" id="SSF117782">
    <property type="entry name" value="YbjQ-like"/>
    <property type="match status" value="1"/>
</dbReference>
<sequence>MQFSTTPTLEGQTIVEYCGVVTGEAILGANIFRDFFAGIRDIVGGRSGAYEKELRKAREIAFEELGSQARALGADAVVGIDIDYETVGQNGSMLMVSVSGTAVKTRR</sequence>